<protein>
    <recommendedName>
        <fullName>Uncharacterized isomerase PA2770</fullName>
        <ecNumber>5.1.-.-</ecNumber>
    </recommendedName>
</protein>
<evidence type="ECO:0000250" key="1"/>
<evidence type="ECO:0000305" key="2"/>
<name>Y2770_PSEAE</name>
<keyword id="KW-0413">Isomerase</keyword>
<keyword id="KW-1185">Reference proteome</keyword>
<proteinExistence type="inferred from homology"/>
<organism>
    <name type="scientific">Pseudomonas aeruginosa (strain ATCC 15692 / DSM 22644 / CIP 104116 / JCM 14847 / LMG 12228 / 1C / PRS 101 / PAO1)</name>
    <dbReference type="NCBI Taxonomy" id="208964"/>
    <lineage>
        <taxon>Bacteria</taxon>
        <taxon>Pseudomonadati</taxon>
        <taxon>Pseudomonadota</taxon>
        <taxon>Gammaproteobacteria</taxon>
        <taxon>Pseudomonadales</taxon>
        <taxon>Pseudomonadaceae</taxon>
        <taxon>Pseudomonas</taxon>
    </lineage>
</organism>
<sequence>MELTIFQVDAFADSPFQGNPAAVCPLDAWLDDERLQAIAEENNLSETAFVVGRDGDYRLRWFTPQVEVDLCGHATLATAWVLIHKLDDASPVLRFATRSGELSVRREGDSLAMDFPAKRPEPCATPDGLLEALGIAEAEVLKTDDYLVVVDDEKTIAALAPDFARLKGLPCRGVAVTARSQRFDFVSRWFGPNVGVNEDPVTGSAHTSLAPYWAQRLGKTRLSAEQGGARKGRLECDVRGERVVISGKAALYMSGTLHL</sequence>
<feature type="chain" id="PRO_0000162398" description="Uncharacterized isomerase PA2770">
    <location>
        <begin position="1"/>
        <end position="259"/>
    </location>
</feature>
<feature type="active site" evidence="1">
    <location>
        <position position="46"/>
    </location>
</feature>
<comment type="similarity">
    <text evidence="2">Belongs to the PhzF family.</text>
</comment>
<gene>
    <name type="ordered locus">PA2770</name>
</gene>
<dbReference type="EC" id="5.1.-.-"/>
<dbReference type="EMBL" id="AE004091">
    <property type="protein sequence ID" value="AAG06158.1"/>
    <property type="molecule type" value="Genomic_DNA"/>
</dbReference>
<dbReference type="PIR" id="A83301">
    <property type="entry name" value="A83301"/>
</dbReference>
<dbReference type="RefSeq" id="NP_251460.1">
    <property type="nucleotide sequence ID" value="NC_002516.2"/>
</dbReference>
<dbReference type="RefSeq" id="WP_003114424.1">
    <property type="nucleotide sequence ID" value="NZ_QZGE01000011.1"/>
</dbReference>
<dbReference type="SMR" id="Q9I073"/>
<dbReference type="STRING" id="208964.PA2770"/>
<dbReference type="PaxDb" id="208964-PA2770"/>
<dbReference type="GeneID" id="878781"/>
<dbReference type="KEGG" id="pae:PA2770"/>
<dbReference type="PATRIC" id="fig|208964.12.peg.2906"/>
<dbReference type="PseudoCAP" id="PA2770"/>
<dbReference type="HOGENOM" id="CLU_048756_2_2_6"/>
<dbReference type="InParanoid" id="Q9I073"/>
<dbReference type="OrthoDB" id="9788221at2"/>
<dbReference type="PhylomeDB" id="Q9I073"/>
<dbReference type="BioCyc" id="PAER208964:G1FZ6-2816-MONOMER"/>
<dbReference type="Proteomes" id="UP000002438">
    <property type="component" value="Chromosome"/>
</dbReference>
<dbReference type="GO" id="GO:0005737">
    <property type="term" value="C:cytoplasm"/>
    <property type="evidence" value="ECO:0000318"/>
    <property type="project" value="GO_Central"/>
</dbReference>
<dbReference type="GO" id="GO:0016853">
    <property type="term" value="F:isomerase activity"/>
    <property type="evidence" value="ECO:0000318"/>
    <property type="project" value="GO_Central"/>
</dbReference>
<dbReference type="GO" id="GO:0009058">
    <property type="term" value="P:biosynthetic process"/>
    <property type="evidence" value="ECO:0007669"/>
    <property type="project" value="InterPro"/>
</dbReference>
<dbReference type="Gene3D" id="3.10.310.10">
    <property type="entry name" value="Diaminopimelate Epimerase, Chain A, domain 1"/>
    <property type="match status" value="2"/>
</dbReference>
<dbReference type="InterPro" id="IPR003719">
    <property type="entry name" value="Phenazine_PhzF-like"/>
</dbReference>
<dbReference type="NCBIfam" id="TIGR00654">
    <property type="entry name" value="PhzF_family"/>
    <property type="match status" value="1"/>
</dbReference>
<dbReference type="PANTHER" id="PTHR13774">
    <property type="entry name" value="PHENAZINE BIOSYNTHESIS PROTEIN"/>
    <property type="match status" value="1"/>
</dbReference>
<dbReference type="PANTHER" id="PTHR13774:SF17">
    <property type="entry name" value="PHENAZINE BIOSYNTHESIS-LIKE DOMAIN-CONTAINING PROTEIN"/>
    <property type="match status" value="1"/>
</dbReference>
<dbReference type="Pfam" id="PF02567">
    <property type="entry name" value="PhzC-PhzF"/>
    <property type="match status" value="1"/>
</dbReference>
<dbReference type="PIRSF" id="PIRSF016184">
    <property type="entry name" value="PhzC_PhzF"/>
    <property type="match status" value="1"/>
</dbReference>
<dbReference type="SUPFAM" id="SSF54506">
    <property type="entry name" value="Diaminopimelate epimerase-like"/>
    <property type="match status" value="1"/>
</dbReference>
<reference key="1">
    <citation type="journal article" date="2000" name="Nature">
        <title>Complete genome sequence of Pseudomonas aeruginosa PAO1, an opportunistic pathogen.</title>
        <authorList>
            <person name="Stover C.K."/>
            <person name="Pham X.-Q.T."/>
            <person name="Erwin A.L."/>
            <person name="Mizoguchi S.D."/>
            <person name="Warrener P."/>
            <person name="Hickey M.J."/>
            <person name="Brinkman F.S.L."/>
            <person name="Hufnagle W.O."/>
            <person name="Kowalik D.J."/>
            <person name="Lagrou M."/>
            <person name="Garber R.L."/>
            <person name="Goltry L."/>
            <person name="Tolentino E."/>
            <person name="Westbrock-Wadman S."/>
            <person name="Yuan Y."/>
            <person name="Brody L.L."/>
            <person name="Coulter S.N."/>
            <person name="Folger K.R."/>
            <person name="Kas A."/>
            <person name="Larbig K."/>
            <person name="Lim R.M."/>
            <person name="Smith K.A."/>
            <person name="Spencer D.H."/>
            <person name="Wong G.K.-S."/>
            <person name="Wu Z."/>
            <person name="Paulsen I.T."/>
            <person name="Reizer J."/>
            <person name="Saier M.H. Jr."/>
            <person name="Hancock R.E.W."/>
            <person name="Lory S."/>
            <person name="Olson M.V."/>
        </authorList>
    </citation>
    <scope>NUCLEOTIDE SEQUENCE [LARGE SCALE GENOMIC DNA]</scope>
    <source>
        <strain>ATCC 15692 / DSM 22644 / CIP 104116 / JCM 14847 / LMG 12228 / 1C / PRS 101 / PAO1</strain>
    </source>
</reference>
<accession>Q9I073</accession>